<proteinExistence type="inferred from homology"/>
<organism>
    <name type="scientific">Pseudomonas syringae pv. syringae</name>
    <dbReference type="NCBI Taxonomy" id="321"/>
    <lineage>
        <taxon>Bacteria</taxon>
        <taxon>Pseudomonadati</taxon>
        <taxon>Pseudomonadota</taxon>
        <taxon>Gammaproteobacteria</taxon>
        <taxon>Pseudomonadales</taxon>
        <taxon>Pseudomonadaceae</taxon>
        <taxon>Pseudomonas</taxon>
        <taxon>Pseudomonas syringae</taxon>
    </lineage>
</organism>
<accession>P0A164</accession>
<accession>P52830</accession>
<keyword id="KW-0687">Ribonucleoprotein</keyword>
<keyword id="KW-0689">Ribosomal protein</keyword>
<gene>
    <name evidence="1" type="primary">rpmI</name>
</gene>
<protein>
    <recommendedName>
        <fullName evidence="1">Large ribosomal subunit protein bL35</fullName>
    </recommendedName>
    <alternativeName>
        <fullName evidence="2">50S ribosomal protein L35</fullName>
    </alternativeName>
</protein>
<sequence>MPKMKTKSGAAKRFLKTANGIKHKHAFKSHILTKMSTKRKRQLRGSSLLHPSDVAKVERMLRLR</sequence>
<feature type="chain" id="PRO_0000177405" description="Large ribosomal subunit protein bL35">
    <location>
        <begin position="1"/>
        <end position="64"/>
    </location>
</feature>
<comment type="similarity">
    <text evidence="1">Belongs to the bacterial ribosomal protein bL35 family.</text>
</comment>
<evidence type="ECO:0000255" key="1">
    <source>
        <dbReference type="HAMAP-Rule" id="MF_00514"/>
    </source>
</evidence>
<evidence type="ECO:0000305" key="2"/>
<dbReference type="EMBL" id="U44118">
    <property type="protein sequence ID" value="AAB05015.1"/>
    <property type="molecule type" value="Genomic_DNA"/>
</dbReference>
<dbReference type="RefSeq" id="WP_002553160.1">
    <property type="nucleotide sequence ID" value="NZ_VBUL01000015.1"/>
</dbReference>
<dbReference type="SMR" id="P0A164"/>
<dbReference type="GeneID" id="98112259"/>
<dbReference type="OMA" id="PKIKTHR"/>
<dbReference type="GO" id="GO:0022625">
    <property type="term" value="C:cytosolic large ribosomal subunit"/>
    <property type="evidence" value="ECO:0007669"/>
    <property type="project" value="TreeGrafter"/>
</dbReference>
<dbReference type="GO" id="GO:0003735">
    <property type="term" value="F:structural constituent of ribosome"/>
    <property type="evidence" value="ECO:0007669"/>
    <property type="project" value="InterPro"/>
</dbReference>
<dbReference type="GO" id="GO:0006412">
    <property type="term" value="P:translation"/>
    <property type="evidence" value="ECO:0007669"/>
    <property type="project" value="UniProtKB-UniRule"/>
</dbReference>
<dbReference type="FunFam" id="4.10.410.60:FF:000001">
    <property type="entry name" value="50S ribosomal protein L35"/>
    <property type="match status" value="1"/>
</dbReference>
<dbReference type="Gene3D" id="4.10.410.60">
    <property type="match status" value="1"/>
</dbReference>
<dbReference type="HAMAP" id="MF_00514">
    <property type="entry name" value="Ribosomal_bL35"/>
    <property type="match status" value="1"/>
</dbReference>
<dbReference type="InterPro" id="IPR001706">
    <property type="entry name" value="Ribosomal_bL35"/>
</dbReference>
<dbReference type="InterPro" id="IPR021137">
    <property type="entry name" value="Ribosomal_bL35-like"/>
</dbReference>
<dbReference type="InterPro" id="IPR018265">
    <property type="entry name" value="Ribosomal_bL35_CS"/>
</dbReference>
<dbReference type="InterPro" id="IPR037229">
    <property type="entry name" value="Ribosomal_bL35_sf"/>
</dbReference>
<dbReference type="NCBIfam" id="TIGR00001">
    <property type="entry name" value="rpmI_bact"/>
    <property type="match status" value="1"/>
</dbReference>
<dbReference type="PANTHER" id="PTHR33343">
    <property type="entry name" value="54S RIBOSOMAL PROTEIN BL35M"/>
    <property type="match status" value="1"/>
</dbReference>
<dbReference type="PANTHER" id="PTHR33343:SF1">
    <property type="entry name" value="LARGE RIBOSOMAL SUBUNIT PROTEIN BL35M"/>
    <property type="match status" value="1"/>
</dbReference>
<dbReference type="Pfam" id="PF01632">
    <property type="entry name" value="Ribosomal_L35p"/>
    <property type="match status" value="1"/>
</dbReference>
<dbReference type="PRINTS" id="PR00064">
    <property type="entry name" value="RIBOSOMALL35"/>
</dbReference>
<dbReference type="SUPFAM" id="SSF143034">
    <property type="entry name" value="L35p-like"/>
    <property type="match status" value="1"/>
</dbReference>
<dbReference type="PROSITE" id="PS00936">
    <property type="entry name" value="RIBOSOMAL_L35"/>
    <property type="match status" value="1"/>
</dbReference>
<reference key="1">
    <citation type="journal article" date="1996" name="J. Bacteriol.">
        <title>Suppression of a sensor kinase-dependent phenotype in Pseudomonas syringae by ribosomal proteins L35 and L20.</title>
        <authorList>
            <person name="Kitten T."/>
            <person name="Willis D.K."/>
        </authorList>
    </citation>
    <scope>NUCLEOTIDE SEQUENCE [GENOMIC DNA]</scope>
    <source>
        <strain>SUPP27</strain>
    </source>
</reference>
<name>RL35_PSESY</name>